<dbReference type="EC" id="6.1.1.4" evidence="1"/>
<dbReference type="EMBL" id="AE016826">
    <property type="protein sequence ID" value="AAO27107.1"/>
    <property type="molecule type" value="Genomic_DNA"/>
</dbReference>
<dbReference type="RefSeq" id="WP_011091508.1">
    <property type="nucleotide sequence ID" value="NC_004545.1"/>
</dbReference>
<dbReference type="SMR" id="P59433"/>
<dbReference type="STRING" id="224915.bbp_395"/>
<dbReference type="KEGG" id="bab:bbp_395"/>
<dbReference type="eggNOG" id="COG0495">
    <property type="taxonomic scope" value="Bacteria"/>
</dbReference>
<dbReference type="HOGENOM" id="CLU_004427_0_0_6"/>
<dbReference type="OrthoDB" id="9810365at2"/>
<dbReference type="Proteomes" id="UP000000601">
    <property type="component" value="Chromosome"/>
</dbReference>
<dbReference type="GO" id="GO:0005829">
    <property type="term" value="C:cytosol"/>
    <property type="evidence" value="ECO:0007669"/>
    <property type="project" value="TreeGrafter"/>
</dbReference>
<dbReference type="GO" id="GO:0002161">
    <property type="term" value="F:aminoacyl-tRNA deacylase activity"/>
    <property type="evidence" value="ECO:0007669"/>
    <property type="project" value="InterPro"/>
</dbReference>
<dbReference type="GO" id="GO:0005524">
    <property type="term" value="F:ATP binding"/>
    <property type="evidence" value="ECO:0007669"/>
    <property type="project" value="UniProtKB-UniRule"/>
</dbReference>
<dbReference type="GO" id="GO:0004823">
    <property type="term" value="F:leucine-tRNA ligase activity"/>
    <property type="evidence" value="ECO:0007669"/>
    <property type="project" value="UniProtKB-UniRule"/>
</dbReference>
<dbReference type="GO" id="GO:0006429">
    <property type="term" value="P:leucyl-tRNA aminoacylation"/>
    <property type="evidence" value="ECO:0007669"/>
    <property type="project" value="UniProtKB-UniRule"/>
</dbReference>
<dbReference type="CDD" id="cd07958">
    <property type="entry name" value="Anticodon_Ia_Leu_BEm"/>
    <property type="match status" value="1"/>
</dbReference>
<dbReference type="CDD" id="cd00812">
    <property type="entry name" value="LeuRS_core"/>
    <property type="match status" value="1"/>
</dbReference>
<dbReference type="FunFam" id="1.10.730.10:FF:000002">
    <property type="entry name" value="Leucine--tRNA ligase"/>
    <property type="match status" value="1"/>
</dbReference>
<dbReference type="Gene3D" id="2.20.28.290">
    <property type="match status" value="1"/>
</dbReference>
<dbReference type="Gene3D" id="3.10.20.590">
    <property type="match status" value="1"/>
</dbReference>
<dbReference type="Gene3D" id="3.40.50.620">
    <property type="entry name" value="HUPs"/>
    <property type="match status" value="2"/>
</dbReference>
<dbReference type="Gene3D" id="1.10.730.10">
    <property type="entry name" value="Isoleucyl-tRNA Synthetase, Domain 1"/>
    <property type="match status" value="1"/>
</dbReference>
<dbReference type="HAMAP" id="MF_00049_B">
    <property type="entry name" value="Leu_tRNA_synth_B"/>
    <property type="match status" value="1"/>
</dbReference>
<dbReference type="InterPro" id="IPR001412">
    <property type="entry name" value="aa-tRNA-synth_I_CS"/>
</dbReference>
<dbReference type="InterPro" id="IPR002300">
    <property type="entry name" value="aa-tRNA-synth_Ia"/>
</dbReference>
<dbReference type="InterPro" id="IPR002302">
    <property type="entry name" value="Leu-tRNA-ligase"/>
</dbReference>
<dbReference type="InterPro" id="IPR025709">
    <property type="entry name" value="Leu_tRNA-synth_edit"/>
</dbReference>
<dbReference type="InterPro" id="IPR013155">
    <property type="entry name" value="M/V/L/I-tRNA-synth_anticd-bd"/>
</dbReference>
<dbReference type="InterPro" id="IPR015413">
    <property type="entry name" value="Methionyl/Leucyl_tRNA_Synth"/>
</dbReference>
<dbReference type="InterPro" id="IPR014729">
    <property type="entry name" value="Rossmann-like_a/b/a_fold"/>
</dbReference>
<dbReference type="InterPro" id="IPR009080">
    <property type="entry name" value="tRNAsynth_Ia_anticodon-bd"/>
</dbReference>
<dbReference type="InterPro" id="IPR009008">
    <property type="entry name" value="Val/Leu/Ile-tRNA-synth_edit"/>
</dbReference>
<dbReference type="NCBIfam" id="TIGR00396">
    <property type="entry name" value="leuS_bact"/>
    <property type="match status" value="1"/>
</dbReference>
<dbReference type="PANTHER" id="PTHR43740:SF2">
    <property type="entry name" value="LEUCINE--TRNA LIGASE, MITOCHONDRIAL"/>
    <property type="match status" value="1"/>
</dbReference>
<dbReference type="PANTHER" id="PTHR43740">
    <property type="entry name" value="LEUCYL-TRNA SYNTHETASE"/>
    <property type="match status" value="1"/>
</dbReference>
<dbReference type="Pfam" id="PF08264">
    <property type="entry name" value="Anticodon_1"/>
    <property type="match status" value="1"/>
</dbReference>
<dbReference type="Pfam" id="PF00133">
    <property type="entry name" value="tRNA-synt_1"/>
    <property type="match status" value="2"/>
</dbReference>
<dbReference type="Pfam" id="PF13603">
    <property type="entry name" value="tRNA-synt_1_2"/>
    <property type="match status" value="1"/>
</dbReference>
<dbReference type="Pfam" id="PF09334">
    <property type="entry name" value="tRNA-synt_1g"/>
    <property type="match status" value="1"/>
</dbReference>
<dbReference type="PRINTS" id="PR00985">
    <property type="entry name" value="TRNASYNTHLEU"/>
</dbReference>
<dbReference type="SUPFAM" id="SSF47323">
    <property type="entry name" value="Anticodon-binding domain of a subclass of class I aminoacyl-tRNA synthetases"/>
    <property type="match status" value="1"/>
</dbReference>
<dbReference type="SUPFAM" id="SSF52374">
    <property type="entry name" value="Nucleotidylyl transferase"/>
    <property type="match status" value="1"/>
</dbReference>
<dbReference type="SUPFAM" id="SSF50677">
    <property type="entry name" value="ValRS/IleRS/LeuRS editing domain"/>
    <property type="match status" value="1"/>
</dbReference>
<dbReference type="PROSITE" id="PS00178">
    <property type="entry name" value="AA_TRNA_LIGASE_I"/>
    <property type="match status" value="1"/>
</dbReference>
<evidence type="ECO:0000255" key="1">
    <source>
        <dbReference type="HAMAP-Rule" id="MF_00049"/>
    </source>
</evidence>
<reference key="1">
    <citation type="journal article" date="2003" name="Proc. Natl. Acad. Sci. U.S.A.">
        <title>Reductive genome evolution in Buchnera aphidicola.</title>
        <authorList>
            <person name="van Ham R.C.H.J."/>
            <person name="Kamerbeek J."/>
            <person name="Palacios C."/>
            <person name="Rausell C."/>
            <person name="Abascal F."/>
            <person name="Bastolla U."/>
            <person name="Fernandez J.M."/>
            <person name="Jimenez L."/>
            <person name="Postigo M."/>
            <person name="Silva F.J."/>
            <person name="Tamames J."/>
            <person name="Viguera E."/>
            <person name="Latorre A."/>
            <person name="Valencia A."/>
            <person name="Moran F."/>
            <person name="Moya A."/>
        </authorList>
    </citation>
    <scope>NUCLEOTIDE SEQUENCE [LARGE SCALE GENOMIC DNA]</scope>
    <source>
        <strain>Bp</strain>
    </source>
</reference>
<keyword id="KW-0030">Aminoacyl-tRNA synthetase</keyword>
<keyword id="KW-0067">ATP-binding</keyword>
<keyword id="KW-0963">Cytoplasm</keyword>
<keyword id="KW-0436">Ligase</keyword>
<keyword id="KW-0547">Nucleotide-binding</keyword>
<keyword id="KW-0648">Protein biosynthesis</keyword>
<keyword id="KW-1185">Reference proteome</keyword>
<organism>
    <name type="scientific">Buchnera aphidicola subsp. Baizongia pistaciae (strain Bp)</name>
    <dbReference type="NCBI Taxonomy" id="224915"/>
    <lineage>
        <taxon>Bacteria</taxon>
        <taxon>Pseudomonadati</taxon>
        <taxon>Pseudomonadota</taxon>
        <taxon>Gammaproteobacteria</taxon>
        <taxon>Enterobacterales</taxon>
        <taxon>Erwiniaceae</taxon>
        <taxon>Buchnera</taxon>
    </lineage>
</organism>
<feature type="chain" id="PRO_0000151989" description="Leucine--tRNA ligase">
    <location>
        <begin position="1"/>
        <end position="861"/>
    </location>
</feature>
<feature type="short sequence motif" description="'HIGH' region">
    <location>
        <begin position="42"/>
        <end position="52"/>
    </location>
</feature>
<feature type="short sequence motif" description="'KMSKS' region">
    <location>
        <begin position="618"/>
        <end position="622"/>
    </location>
</feature>
<feature type="binding site" evidence="1">
    <location>
        <position position="621"/>
    </location>
    <ligand>
        <name>ATP</name>
        <dbReference type="ChEBI" id="CHEBI:30616"/>
    </ligand>
</feature>
<accession>P59433</accession>
<proteinExistence type="inferred from homology"/>
<sequence length="861" mass="101600">MKQNYCPKTIEPYVQSIWKKKNTFKVTENSNKEKFYCLAMIPYPSGKLHMGHVRNYTISDVIARYQRMLGKNVLHPMGWDAFGLPAENAAIKNNTHPAQWTYENIKYMKQQLISLGLSYDWDREITTCKPEYYQWEQWFFIELYKKNLVYKKKSWVNWCEYDKTVLANEQVINELCWRCNNKVIKKKIFQWFIKITKYAEELLNDLDNLPEWPEKVKTMQHNWIGRNHGIKIKLKLANQHTILNDVFISKPSTLMGATFITLSPSHELSFKIARKKHKIQEFIENCSSNTNTYNDINNTNIGINTNEFALHPITKKKLPIWITNYVLSDYDTNSILCVPAHNQHDLNFAIKYNLKIKAVILNLDGTEPKIKNTAMTSMGKLFNSNQYNNLNYQEGSYRIIQDLENNHIGKKITYYRLRDWSISRQRYWGAPIPMAVLENKKNVPIPKQYLPIILPETIPFKNIKPLSNNILLKKIYIDEKIAICESDTFDTFLESSWYYARFTCNNFHKGMISQKLANYWLPVDQYIGGIEHAVMHLIYFRFVHKLLRDLGLVYSNEPVKKLLCQGMVLSDAFYYFDHNKQKQWISAKSITIKYDSNHKIQSHFYSNNKKIFHAGMIKMSKSKFNGIEPEDIIKKYGTDTIRLFIMFAAPVESALEWKESGVKGIHKFLKKLWVLSYNHIKLYNHKIKLRINLFTEQQQHIYSELHKTIKIVSQYITDTQSFNVAISKIMKFSNTLMSISLKNEQNQALMQESLLAVIQMLYPFIPHFSFAIWEFLSPKKENIDFISWPKYNFKAILSKLKYTIIIQINGKKRHKILALKNSSQEKILEIILNENKIKKYLNNKPIQKIIYIPNKILNLVI</sequence>
<comment type="catalytic activity">
    <reaction evidence="1">
        <text>tRNA(Leu) + L-leucine + ATP = L-leucyl-tRNA(Leu) + AMP + diphosphate</text>
        <dbReference type="Rhea" id="RHEA:11688"/>
        <dbReference type="Rhea" id="RHEA-COMP:9613"/>
        <dbReference type="Rhea" id="RHEA-COMP:9622"/>
        <dbReference type="ChEBI" id="CHEBI:30616"/>
        <dbReference type="ChEBI" id="CHEBI:33019"/>
        <dbReference type="ChEBI" id="CHEBI:57427"/>
        <dbReference type="ChEBI" id="CHEBI:78442"/>
        <dbReference type="ChEBI" id="CHEBI:78494"/>
        <dbReference type="ChEBI" id="CHEBI:456215"/>
        <dbReference type="EC" id="6.1.1.4"/>
    </reaction>
</comment>
<comment type="subcellular location">
    <subcellularLocation>
        <location evidence="1">Cytoplasm</location>
    </subcellularLocation>
</comment>
<comment type="similarity">
    <text evidence="1">Belongs to the class-I aminoacyl-tRNA synthetase family.</text>
</comment>
<gene>
    <name evidence="1" type="primary">leuS</name>
    <name type="ordered locus">bbp_395</name>
</gene>
<protein>
    <recommendedName>
        <fullName evidence="1">Leucine--tRNA ligase</fullName>
        <ecNumber evidence="1">6.1.1.4</ecNumber>
    </recommendedName>
    <alternativeName>
        <fullName evidence="1">Leucyl-tRNA synthetase</fullName>
        <shortName evidence="1">LeuRS</shortName>
    </alternativeName>
</protein>
<name>SYL_BUCBP</name>